<keyword id="KW-0687">Ribonucleoprotein</keyword>
<keyword id="KW-0689">Ribosomal protein</keyword>
<keyword id="KW-0694">RNA-binding</keyword>
<keyword id="KW-0699">rRNA-binding</keyword>
<keyword id="KW-0820">tRNA-binding</keyword>
<organism>
    <name type="scientific">Haemophilus influenzae (strain PittGG)</name>
    <dbReference type="NCBI Taxonomy" id="374931"/>
    <lineage>
        <taxon>Bacteria</taxon>
        <taxon>Pseudomonadati</taxon>
        <taxon>Pseudomonadota</taxon>
        <taxon>Gammaproteobacteria</taxon>
        <taxon>Pasteurellales</taxon>
        <taxon>Pasteurellaceae</taxon>
        <taxon>Haemophilus</taxon>
    </lineage>
</organism>
<comment type="function">
    <text evidence="1">Located at the top of the head of the 30S subunit, it contacts several helices of the 16S rRNA. In the 70S ribosome it contacts the 23S rRNA (bridge B1a) and protein L5 of the 50S subunit (bridge B1b), connecting the 2 subunits; these bridges are implicated in subunit movement. Contacts the tRNAs in the A and P-sites.</text>
</comment>
<comment type="subunit">
    <text evidence="1">Part of the 30S ribosomal subunit. Forms a loose heterodimer with protein S19. Forms two bridges to the 50S subunit in the 70S ribosome.</text>
</comment>
<comment type="similarity">
    <text evidence="1">Belongs to the universal ribosomal protein uS13 family.</text>
</comment>
<name>RS13_HAEIG</name>
<feature type="chain" id="PRO_0000306615" description="Small ribosomal subunit protein uS13">
    <location>
        <begin position="1"/>
        <end position="118"/>
    </location>
</feature>
<feature type="region of interest" description="Disordered" evidence="2">
    <location>
        <begin position="94"/>
        <end position="118"/>
    </location>
</feature>
<dbReference type="EMBL" id="CP000672">
    <property type="protein sequence ID" value="ABR00358.1"/>
    <property type="molecule type" value="Genomic_DNA"/>
</dbReference>
<dbReference type="SMR" id="A5UHV2"/>
<dbReference type="KEGG" id="hiq:CGSHiGG_07495"/>
<dbReference type="HOGENOM" id="CLU_103849_1_2_6"/>
<dbReference type="Proteomes" id="UP000001990">
    <property type="component" value="Chromosome"/>
</dbReference>
<dbReference type="GO" id="GO:0005829">
    <property type="term" value="C:cytosol"/>
    <property type="evidence" value="ECO:0007669"/>
    <property type="project" value="TreeGrafter"/>
</dbReference>
<dbReference type="GO" id="GO:0015935">
    <property type="term" value="C:small ribosomal subunit"/>
    <property type="evidence" value="ECO:0007669"/>
    <property type="project" value="TreeGrafter"/>
</dbReference>
<dbReference type="GO" id="GO:0019843">
    <property type="term" value="F:rRNA binding"/>
    <property type="evidence" value="ECO:0007669"/>
    <property type="project" value="UniProtKB-UniRule"/>
</dbReference>
<dbReference type="GO" id="GO:0003735">
    <property type="term" value="F:structural constituent of ribosome"/>
    <property type="evidence" value="ECO:0007669"/>
    <property type="project" value="InterPro"/>
</dbReference>
<dbReference type="GO" id="GO:0000049">
    <property type="term" value="F:tRNA binding"/>
    <property type="evidence" value="ECO:0007669"/>
    <property type="project" value="UniProtKB-UniRule"/>
</dbReference>
<dbReference type="GO" id="GO:0006412">
    <property type="term" value="P:translation"/>
    <property type="evidence" value="ECO:0007669"/>
    <property type="project" value="UniProtKB-UniRule"/>
</dbReference>
<dbReference type="FunFam" id="1.10.8.50:FF:000001">
    <property type="entry name" value="30S ribosomal protein S13"/>
    <property type="match status" value="1"/>
</dbReference>
<dbReference type="FunFam" id="4.10.910.10:FF:000001">
    <property type="entry name" value="30S ribosomal protein S13"/>
    <property type="match status" value="1"/>
</dbReference>
<dbReference type="Gene3D" id="1.10.8.50">
    <property type="match status" value="1"/>
</dbReference>
<dbReference type="Gene3D" id="4.10.910.10">
    <property type="entry name" value="30s ribosomal protein s13, domain 2"/>
    <property type="match status" value="1"/>
</dbReference>
<dbReference type="HAMAP" id="MF_01315">
    <property type="entry name" value="Ribosomal_uS13"/>
    <property type="match status" value="1"/>
</dbReference>
<dbReference type="InterPro" id="IPR027437">
    <property type="entry name" value="Rbsml_uS13_C"/>
</dbReference>
<dbReference type="InterPro" id="IPR001892">
    <property type="entry name" value="Ribosomal_uS13"/>
</dbReference>
<dbReference type="InterPro" id="IPR010979">
    <property type="entry name" value="Ribosomal_uS13-like_H2TH"/>
</dbReference>
<dbReference type="InterPro" id="IPR019980">
    <property type="entry name" value="Ribosomal_uS13_bac-type"/>
</dbReference>
<dbReference type="InterPro" id="IPR018269">
    <property type="entry name" value="Ribosomal_uS13_CS"/>
</dbReference>
<dbReference type="NCBIfam" id="TIGR03631">
    <property type="entry name" value="uS13_bact"/>
    <property type="match status" value="1"/>
</dbReference>
<dbReference type="PANTHER" id="PTHR10871">
    <property type="entry name" value="30S RIBOSOMAL PROTEIN S13/40S RIBOSOMAL PROTEIN S18"/>
    <property type="match status" value="1"/>
</dbReference>
<dbReference type="PANTHER" id="PTHR10871:SF1">
    <property type="entry name" value="SMALL RIBOSOMAL SUBUNIT PROTEIN US13M"/>
    <property type="match status" value="1"/>
</dbReference>
<dbReference type="Pfam" id="PF00416">
    <property type="entry name" value="Ribosomal_S13"/>
    <property type="match status" value="1"/>
</dbReference>
<dbReference type="PIRSF" id="PIRSF002134">
    <property type="entry name" value="Ribosomal_S13"/>
    <property type="match status" value="1"/>
</dbReference>
<dbReference type="SUPFAM" id="SSF46946">
    <property type="entry name" value="S13-like H2TH domain"/>
    <property type="match status" value="1"/>
</dbReference>
<dbReference type="PROSITE" id="PS00646">
    <property type="entry name" value="RIBOSOMAL_S13_1"/>
    <property type="match status" value="1"/>
</dbReference>
<dbReference type="PROSITE" id="PS50159">
    <property type="entry name" value="RIBOSOMAL_S13_2"/>
    <property type="match status" value="1"/>
</dbReference>
<reference key="1">
    <citation type="journal article" date="2007" name="Genome Biol.">
        <title>Characterization and modeling of the Haemophilus influenzae core and supragenomes based on the complete genomic sequences of Rd and 12 clinical nontypeable strains.</title>
        <authorList>
            <person name="Hogg J.S."/>
            <person name="Hu F.Z."/>
            <person name="Janto B."/>
            <person name="Boissy R."/>
            <person name="Hayes J."/>
            <person name="Keefe R."/>
            <person name="Post J.C."/>
            <person name="Ehrlich G.D."/>
        </authorList>
    </citation>
    <scope>NUCLEOTIDE SEQUENCE [LARGE SCALE GENOMIC DNA]</scope>
    <source>
        <strain>PittGG</strain>
    </source>
</reference>
<sequence length="118" mass="13265">MARIAGINIPDHKHAVIALTAIYGIGKTRSQAICAAAGIAEDVKIRELSEEQIDKLRDEVGKFTVEGDLRREVTLNIKRLLDLGCYRGLRHRRSLPVRGQRTKTNARTRKGPRKPIKK</sequence>
<evidence type="ECO:0000255" key="1">
    <source>
        <dbReference type="HAMAP-Rule" id="MF_01315"/>
    </source>
</evidence>
<evidence type="ECO:0000256" key="2">
    <source>
        <dbReference type="SAM" id="MobiDB-lite"/>
    </source>
</evidence>
<evidence type="ECO:0000305" key="3"/>
<gene>
    <name evidence="1" type="primary">rpsM</name>
    <name type="ordered locus">CGSHiGG_07495</name>
</gene>
<proteinExistence type="inferred from homology"/>
<accession>A5UHV2</accession>
<protein>
    <recommendedName>
        <fullName evidence="1">Small ribosomal subunit protein uS13</fullName>
    </recommendedName>
    <alternativeName>
        <fullName evidence="3">30S ribosomal protein S13</fullName>
    </alternativeName>
</protein>